<gene>
    <name evidence="1" type="primary">obg</name>
    <name type="ordered locus">VV0472</name>
</gene>
<comment type="function">
    <text evidence="1">An essential GTPase which binds GTP, GDP and possibly (p)ppGpp with moderate affinity, with high nucleotide exchange rates and a fairly low GTP hydrolysis rate. Plays a role in control of the cell cycle, stress response, ribosome biogenesis and in those bacteria that undergo differentiation, in morphogenesis control.</text>
</comment>
<comment type="cofactor">
    <cofactor evidence="1">
        <name>Mg(2+)</name>
        <dbReference type="ChEBI" id="CHEBI:18420"/>
    </cofactor>
</comment>
<comment type="subunit">
    <text evidence="1">Monomer.</text>
</comment>
<comment type="subcellular location">
    <subcellularLocation>
        <location evidence="1">Cytoplasm</location>
    </subcellularLocation>
</comment>
<comment type="similarity">
    <text evidence="1">Belongs to the TRAFAC class OBG-HflX-like GTPase superfamily. OBG GTPase family.</text>
</comment>
<proteinExistence type="inferred from homology"/>
<evidence type="ECO:0000255" key="1">
    <source>
        <dbReference type="HAMAP-Rule" id="MF_01454"/>
    </source>
</evidence>
<evidence type="ECO:0000255" key="2">
    <source>
        <dbReference type="PROSITE-ProRule" id="PRU01231"/>
    </source>
</evidence>
<evidence type="ECO:0000256" key="3">
    <source>
        <dbReference type="SAM" id="MobiDB-lite"/>
    </source>
</evidence>
<sequence>MKFVDEAVIKVQAGDGGNGVVSFWREKFVTKGGPDGGDGGDGGDVYIQADENLNTLIDYRFQRFYEAERGQNGSGGNCTGKRGKDITLRVPVGTRAVDIHTNEIVAEVAEHGKKVMVAKGGWHGLGNTRFKSSVNRAPRQKTMGTKGEIRELRLELLLLADVGMLGLPNAGKSTFIRAVSAAKPKVADYPFTTLIPSLGVVSVVPEKSFVVADIPGLIEGAADGAGLGIRFLKHLERCRVLLHMIDIFPIDQSDPVQNALTIIDELEQYSEKLANKPRWLVFNKVDLVSEEQADEIIQEVIDALGWEEQYFKISAVNRQGTKELCYKLADFMEQLPREEQEVSEEEKVNFMWDYHPDANQGEVITEDDDDWDDWDDEEDDGHVIYVRE</sequence>
<dbReference type="EC" id="3.6.5.-" evidence="1"/>
<dbReference type="EMBL" id="BA000037">
    <property type="protein sequence ID" value="BAC93236.1"/>
    <property type="molecule type" value="Genomic_DNA"/>
</dbReference>
<dbReference type="SMR" id="Q7MP92"/>
<dbReference type="STRING" id="672.VV93_v1c04390"/>
<dbReference type="KEGG" id="vvy:VV0472"/>
<dbReference type="PATRIC" id="fig|196600.6.peg.498"/>
<dbReference type="eggNOG" id="COG0536">
    <property type="taxonomic scope" value="Bacteria"/>
</dbReference>
<dbReference type="HOGENOM" id="CLU_011747_2_0_6"/>
<dbReference type="Proteomes" id="UP000002675">
    <property type="component" value="Chromosome I"/>
</dbReference>
<dbReference type="GO" id="GO:0005737">
    <property type="term" value="C:cytoplasm"/>
    <property type="evidence" value="ECO:0007669"/>
    <property type="project" value="UniProtKB-SubCell"/>
</dbReference>
<dbReference type="GO" id="GO:0005525">
    <property type="term" value="F:GTP binding"/>
    <property type="evidence" value="ECO:0007669"/>
    <property type="project" value="UniProtKB-UniRule"/>
</dbReference>
<dbReference type="GO" id="GO:0003924">
    <property type="term" value="F:GTPase activity"/>
    <property type="evidence" value="ECO:0007669"/>
    <property type="project" value="UniProtKB-UniRule"/>
</dbReference>
<dbReference type="GO" id="GO:0000287">
    <property type="term" value="F:magnesium ion binding"/>
    <property type="evidence" value="ECO:0007669"/>
    <property type="project" value="InterPro"/>
</dbReference>
<dbReference type="GO" id="GO:0042254">
    <property type="term" value="P:ribosome biogenesis"/>
    <property type="evidence" value="ECO:0007669"/>
    <property type="project" value="UniProtKB-UniRule"/>
</dbReference>
<dbReference type="CDD" id="cd01898">
    <property type="entry name" value="Obg"/>
    <property type="match status" value="1"/>
</dbReference>
<dbReference type="FunFam" id="2.70.210.12:FF:000001">
    <property type="entry name" value="GTPase Obg"/>
    <property type="match status" value="1"/>
</dbReference>
<dbReference type="FunFam" id="3.40.50.300:FF:000185">
    <property type="entry name" value="GTPase Obg"/>
    <property type="match status" value="1"/>
</dbReference>
<dbReference type="Gene3D" id="2.70.210.12">
    <property type="entry name" value="GTP1/OBG domain"/>
    <property type="match status" value="1"/>
</dbReference>
<dbReference type="Gene3D" id="3.40.50.300">
    <property type="entry name" value="P-loop containing nucleotide triphosphate hydrolases"/>
    <property type="match status" value="1"/>
</dbReference>
<dbReference type="HAMAP" id="MF_01454">
    <property type="entry name" value="GTPase_Obg"/>
    <property type="match status" value="1"/>
</dbReference>
<dbReference type="InterPro" id="IPR031167">
    <property type="entry name" value="G_OBG"/>
</dbReference>
<dbReference type="InterPro" id="IPR006073">
    <property type="entry name" value="GTP-bd"/>
</dbReference>
<dbReference type="InterPro" id="IPR014100">
    <property type="entry name" value="GTP-bd_Obg/CgtA"/>
</dbReference>
<dbReference type="InterPro" id="IPR006074">
    <property type="entry name" value="GTP1-OBG_CS"/>
</dbReference>
<dbReference type="InterPro" id="IPR006169">
    <property type="entry name" value="GTP1_OBG_dom"/>
</dbReference>
<dbReference type="InterPro" id="IPR036726">
    <property type="entry name" value="GTP1_OBG_dom_sf"/>
</dbReference>
<dbReference type="InterPro" id="IPR045086">
    <property type="entry name" value="OBG_GTPase"/>
</dbReference>
<dbReference type="InterPro" id="IPR027417">
    <property type="entry name" value="P-loop_NTPase"/>
</dbReference>
<dbReference type="NCBIfam" id="TIGR02729">
    <property type="entry name" value="Obg_CgtA"/>
    <property type="match status" value="1"/>
</dbReference>
<dbReference type="NCBIfam" id="NF008955">
    <property type="entry name" value="PRK12297.1"/>
    <property type="match status" value="1"/>
</dbReference>
<dbReference type="NCBIfam" id="NF008956">
    <property type="entry name" value="PRK12299.1"/>
    <property type="match status" value="1"/>
</dbReference>
<dbReference type="PANTHER" id="PTHR11702">
    <property type="entry name" value="DEVELOPMENTALLY REGULATED GTP-BINDING PROTEIN-RELATED"/>
    <property type="match status" value="1"/>
</dbReference>
<dbReference type="PANTHER" id="PTHR11702:SF31">
    <property type="entry name" value="MITOCHONDRIAL RIBOSOME-ASSOCIATED GTPASE 2"/>
    <property type="match status" value="1"/>
</dbReference>
<dbReference type="Pfam" id="PF01018">
    <property type="entry name" value="GTP1_OBG"/>
    <property type="match status" value="1"/>
</dbReference>
<dbReference type="Pfam" id="PF01926">
    <property type="entry name" value="MMR_HSR1"/>
    <property type="match status" value="1"/>
</dbReference>
<dbReference type="PIRSF" id="PIRSF002401">
    <property type="entry name" value="GTP_bd_Obg/CgtA"/>
    <property type="match status" value="1"/>
</dbReference>
<dbReference type="PRINTS" id="PR00326">
    <property type="entry name" value="GTP1OBG"/>
</dbReference>
<dbReference type="SUPFAM" id="SSF82051">
    <property type="entry name" value="Obg GTP-binding protein N-terminal domain"/>
    <property type="match status" value="1"/>
</dbReference>
<dbReference type="SUPFAM" id="SSF52540">
    <property type="entry name" value="P-loop containing nucleoside triphosphate hydrolases"/>
    <property type="match status" value="1"/>
</dbReference>
<dbReference type="PROSITE" id="PS51710">
    <property type="entry name" value="G_OBG"/>
    <property type="match status" value="1"/>
</dbReference>
<dbReference type="PROSITE" id="PS00905">
    <property type="entry name" value="GTP1_OBG"/>
    <property type="match status" value="1"/>
</dbReference>
<dbReference type="PROSITE" id="PS51883">
    <property type="entry name" value="OBG"/>
    <property type="match status" value="1"/>
</dbReference>
<accession>Q7MP92</accession>
<name>OBG_VIBVY</name>
<protein>
    <recommendedName>
        <fullName evidence="1">GTPase Obg</fullName>
        <ecNumber evidence="1">3.6.5.-</ecNumber>
    </recommendedName>
    <alternativeName>
        <fullName evidence="1">GTP-binding protein Obg</fullName>
    </alternativeName>
</protein>
<feature type="chain" id="PRO_0000386385" description="GTPase Obg">
    <location>
        <begin position="1"/>
        <end position="388"/>
    </location>
</feature>
<feature type="domain" description="Obg" evidence="2">
    <location>
        <begin position="1"/>
        <end position="159"/>
    </location>
</feature>
<feature type="domain" description="OBG-type G" evidence="1">
    <location>
        <begin position="160"/>
        <end position="333"/>
    </location>
</feature>
<feature type="region of interest" description="Disordered" evidence="3">
    <location>
        <begin position="359"/>
        <end position="380"/>
    </location>
</feature>
<feature type="compositionally biased region" description="Acidic residues" evidence="3">
    <location>
        <begin position="364"/>
        <end position="380"/>
    </location>
</feature>
<feature type="binding site" evidence="1">
    <location>
        <begin position="166"/>
        <end position="173"/>
    </location>
    <ligand>
        <name>GTP</name>
        <dbReference type="ChEBI" id="CHEBI:37565"/>
    </ligand>
</feature>
<feature type="binding site" evidence="1">
    <location>
        <position position="173"/>
    </location>
    <ligand>
        <name>Mg(2+)</name>
        <dbReference type="ChEBI" id="CHEBI:18420"/>
    </ligand>
</feature>
<feature type="binding site" evidence="1">
    <location>
        <begin position="191"/>
        <end position="195"/>
    </location>
    <ligand>
        <name>GTP</name>
        <dbReference type="ChEBI" id="CHEBI:37565"/>
    </ligand>
</feature>
<feature type="binding site" evidence="1">
    <location>
        <position position="193"/>
    </location>
    <ligand>
        <name>Mg(2+)</name>
        <dbReference type="ChEBI" id="CHEBI:18420"/>
    </ligand>
</feature>
<feature type="binding site" evidence="1">
    <location>
        <begin position="213"/>
        <end position="216"/>
    </location>
    <ligand>
        <name>GTP</name>
        <dbReference type="ChEBI" id="CHEBI:37565"/>
    </ligand>
</feature>
<feature type="binding site" evidence="1">
    <location>
        <begin position="283"/>
        <end position="286"/>
    </location>
    <ligand>
        <name>GTP</name>
        <dbReference type="ChEBI" id="CHEBI:37565"/>
    </ligand>
</feature>
<feature type="binding site" evidence="1">
    <location>
        <begin position="314"/>
        <end position="316"/>
    </location>
    <ligand>
        <name>GTP</name>
        <dbReference type="ChEBI" id="CHEBI:37565"/>
    </ligand>
</feature>
<organism>
    <name type="scientific">Vibrio vulnificus (strain YJ016)</name>
    <dbReference type="NCBI Taxonomy" id="196600"/>
    <lineage>
        <taxon>Bacteria</taxon>
        <taxon>Pseudomonadati</taxon>
        <taxon>Pseudomonadota</taxon>
        <taxon>Gammaproteobacteria</taxon>
        <taxon>Vibrionales</taxon>
        <taxon>Vibrionaceae</taxon>
        <taxon>Vibrio</taxon>
    </lineage>
</organism>
<keyword id="KW-0963">Cytoplasm</keyword>
<keyword id="KW-0342">GTP-binding</keyword>
<keyword id="KW-0378">Hydrolase</keyword>
<keyword id="KW-0460">Magnesium</keyword>
<keyword id="KW-0479">Metal-binding</keyword>
<keyword id="KW-0547">Nucleotide-binding</keyword>
<reference key="1">
    <citation type="journal article" date="2003" name="Genome Res.">
        <title>Comparative genome analysis of Vibrio vulnificus, a marine pathogen.</title>
        <authorList>
            <person name="Chen C.-Y."/>
            <person name="Wu K.-M."/>
            <person name="Chang Y.-C."/>
            <person name="Chang C.-H."/>
            <person name="Tsai H.-C."/>
            <person name="Liao T.-L."/>
            <person name="Liu Y.-M."/>
            <person name="Chen H.-J."/>
            <person name="Shen A.B.-T."/>
            <person name="Li J.-C."/>
            <person name="Su T.-L."/>
            <person name="Shao C.-P."/>
            <person name="Lee C.-T."/>
            <person name="Hor L.-I."/>
            <person name="Tsai S.-F."/>
        </authorList>
    </citation>
    <scope>NUCLEOTIDE SEQUENCE [LARGE SCALE GENOMIC DNA]</scope>
    <source>
        <strain>YJ016</strain>
    </source>
</reference>